<dbReference type="EC" id="1.14.14.117"/>
<dbReference type="EMBL" id="U81806">
    <property type="protein sequence ID" value="AAC49709.1"/>
    <property type="molecule type" value="Genomic_DNA"/>
</dbReference>
<dbReference type="EMBL" id="U81807">
    <property type="protein sequence ID" value="AAC49710.1"/>
    <property type="molecule type" value="mRNA"/>
</dbReference>
<dbReference type="EMBL" id="EQ963478">
    <property type="protein sequence ID" value="EED51155.1"/>
    <property type="molecule type" value="Genomic_DNA"/>
</dbReference>
<dbReference type="RefSeq" id="XP_002379931.1">
    <property type="nucleotide sequence ID" value="XM_002379890.1"/>
</dbReference>
<dbReference type="SMR" id="B8NHY4"/>
<dbReference type="STRING" id="332952.B8NHY4"/>
<dbReference type="EnsemblFungi" id="EED51155">
    <property type="protein sequence ID" value="EED51155"/>
    <property type="gene ID" value="AFLA_139200"/>
</dbReference>
<dbReference type="VEuPathDB" id="FungiDB:AFLA_006290"/>
<dbReference type="eggNOG" id="KOG0156">
    <property type="taxonomic scope" value="Eukaryota"/>
</dbReference>
<dbReference type="HOGENOM" id="CLU_001570_2_3_1"/>
<dbReference type="OMA" id="MQWRAMF"/>
<dbReference type="UniPathway" id="UPA00287"/>
<dbReference type="GO" id="GO:0140399">
    <property type="term" value="F:aflatoxin B synthase activity"/>
    <property type="evidence" value="ECO:0007669"/>
    <property type="project" value="UniProtKB-EC"/>
</dbReference>
<dbReference type="GO" id="GO:0020037">
    <property type="term" value="F:heme binding"/>
    <property type="evidence" value="ECO:0007669"/>
    <property type="project" value="InterPro"/>
</dbReference>
<dbReference type="GO" id="GO:0005506">
    <property type="term" value="F:iron ion binding"/>
    <property type="evidence" value="ECO:0007669"/>
    <property type="project" value="InterPro"/>
</dbReference>
<dbReference type="CDD" id="cd11065">
    <property type="entry name" value="CYP64-like"/>
    <property type="match status" value="1"/>
</dbReference>
<dbReference type="FunFam" id="1.10.630.10:FF:000116">
    <property type="entry name" value="Oxidoreductase A,oxidoreductase/cytochrome P450 monooxygenase"/>
    <property type="match status" value="1"/>
</dbReference>
<dbReference type="Gene3D" id="1.10.630.10">
    <property type="entry name" value="Cytochrome P450"/>
    <property type="match status" value="1"/>
</dbReference>
<dbReference type="InterPro" id="IPR001128">
    <property type="entry name" value="Cyt_P450"/>
</dbReference>
<dbReference type="InterPro" id="IPR017972">
    <property type="entry name" value="Cyt_P450_CS"/>
</dbReference>
<dbReference type="InterPro" id="IPR002401">
    <property type="entry name" value="Cyt_P450_E_grp-I"/>
</dbReference>
<dbReference type="InterPro" id="IPR036396">
    <property type="entry name" value="Cyt_P450_sf"/>
</dbReference>
<dbReference type="InterPro" id="IPR050364">
    <property type="entry name" value="Cytochrome_P450_fung"/>
</dbReference>
<dbReference type="PANTHER" id="PTHR46300:SF7">
    <property type="entry name" value="P450, PUTATIVE (EUROFUNG)-RELATED"/>
    <property type="match status" value="1"/>
</dbReference>
<dbReference type="PANTHER" id="PTHR46300">
    <property type="entry name" value="P450, PUTATIVE (EUROFUNG)-RELATED-RELATED"/>
    <property type="match status" value="1"/>
</dbReference>
<dbReference type="Pfam" id="PF00067">
    <property type="entry name" value="p450"/>
    <property type="match status" value="1"/>
</dbReference>
<dbReference type="PRINTS" id="PR00463">
    <property type="entry name" value="EP450I"/>
</dbReference>
<dbReference type="SUPFAM" id="SSF48264">
    <property type="entry name" value="Cytochrome P450"/>
    <property type="match status" value="1"/>
</dbReference>
<dbReference type="PROSITE" id="PS00086">
    <property type="entry name" value="CYTOCHROME_P450"/>
    <property type="match status" value="1"/>
</dbReference>
<reference key="1">
    <citation type="journal article" date="1997" name="Appl. Environ. Microbiol.">
        <title>ord1, an oxidoreductase gene responsible for conversion of O-methylsterigmatocystin to aflatoxin in Aspergillus flavus.</title>
        <authorList>
            <person name="Prieto R."/>
            <person name="Woloshuk C.P."/>
        </authorList>
    </citation>
    <scope>NUCLEOTIDE SEQUENCE [GENOMIC DNA / MRNA]</scope>
    <scope>FUNCTION</scope>
</reference>
<reference key="2">
    <citation type="journal article" date="2015" name="Genome Announc.">
        <title>Genome sequence of Aspergillus flavus NRRL 3357, a strain that causes aflatoxin contamination of food and feed.</title>
        <authorList>
            <person name="Nierman W.C."/>
            <person name="Yu J."/>
            <person name="Fedorova-Abrams N.D."/>
            <person name="Losada L."/>
            <person name="Cleveland T.E."/>
            <person name="Bhatnagar D."/>
            <person name="Bennett J.W."/>
            <person name="Dean R."/>
            <person name="Payne G.A."/>
        </authorList>
    </citation>
    <scope>NUCLEOTIDE SEQUENCE [LARGE SCALE GENOMIC DNA]</scope>
    <source>
        <strain>ATCC 200026 / FGSC A1120 / IAM 13836 / NRRL 3357 / JCM 12722 / SRRC 167</strain>
    </source>
</reference>
<sequence length="528" mass="60211">MIYSIIICAGALLGLWILEKLLAPKDTRPPLPPGPWRKPIIGNLTDFPPKGTPEWLFWAKHQERYGPMSSLEVMGQTIIMINDAQLGIEIMHKKSALSQMIPDAPFAHMAGWGMSLATERNRQAWKTIRANMKQEIGTRRAISTFHPKMEIGIRRFLLRTLDNPDDLRFHIRKEANAFMMDVAYGYTIAPHGKDELYDLTQQSVRQFSHIFSPGEWSVNFFPILRYVPSWFPGASFQIKAAEYKRTIERMTMVPYLWIKDQVARGCSRPSILLRLLQKGHYESGSHQEQVLVWTNAEFVMGGSDTTVSAVSSFFVAMALYPEVQRKAREELDRVVGPTTLATFEHRSQLPFIDALVKEVFRWHPASPLGAPHITQEDQIWDGYLLPKGALLLPNIWTFTHDPSVYHDPMVFKPERFLEGKDSPPETDPMKFVFGFGRRICPGRFVTDEKLFLIACHAVSCFFISPKDPGAPEPDWLPGVISQPGAFDLNVVPRSPAHEELIRSIETDHPWKNADATDISRFMARNQMI</sequence>
<protein>
    <recommendedName>
        <fullName>O-methylsterigmatocystin oxidoreductase</fullName>
        <shortName>OMST oxidoreductase</shortName>
        <ecNumber>1.14.14.117</ecNumber>
    </recommendedName>
    <alternativeName>
        <fullName>Aflatoxin B synthase</fullName>
    </alternativeName>
    <alternativeName>
        <fullName>Aflatoxin biosynthesis protein Q</fullName>
    </alternativeName>
    <alternativeName>
        <fullName>Cytochrome P450 64</fullName>
    </alternativeName>
</protein>
<feature type="chain" id="PRO_0000370239" description="O-methylsterigmatocystin oxidoreductase">
    <location>
        <begin position="1"/>
        <end position="528"/>
    </location>
</feature>
<feature type="binding site" description="axial binding residue" evidence="1">
    <location>
        <position position="440"/>
    </location>
    <ligand>
        <name>heme</name>
        <dbReference type="ChEBI" id="CHEBI:30413"/>
    </ligand>
    <ligandPart>
        <name>Fe</name>
        <dbReference type="ChEBI" id="CHEBI:18248"/>
    </ligandPart>
</feature>
<evidence type="ECO:0000250" key="1"/>
<evidence type="ECO:0000269" key="2">
    <source>
    </source>
</evidence>
<evidence type="ECO:0000305" key="3"/>
<accession>B8NHY4</accession>
<accession>P79084</accession>
<accession>Q5J3B9</accession>
<organism>
    <name type="scientific">Aspergillus flavus (strain ATCC 200026 / FGSC A1120 / IAM 13836 / NRRL 3357 / JCM 12722 / SRRC 167)</name>
    <dbReference type="NCBI Taxonomy" id="332952"/>
    <lineage>
        <taxon>Eukaryota</taxon>
        <taxon>Fungi</taxon>
        <taxon>Dikarya</taxon>
        <taxon>Ascomycota</taxon>
        <taxon>Pezizomycotina</taxon>
        <taxon>Eurotiomycetes</taxon>
        <taxon>Eurotiomycetidae</taxon>
        <taxon>Eurotiales</taxon>
        <taxon>Aspergillaceae</taxon>
        <taxon>Aspergillus</taxon>
        <taxon>Aspergillus subgen. Circumdati</taxon>
    </lineage>
</organism>
<keyword id="KW-0349">Heme</keyword>
<keyword id="KW-0408">Iron</keyword>
<keyword id="KW-0479">Metal-binding</keyword>
<keyword id="KW-0503">Monooxygenase</keyword>
<keyword id="KW-0560">Oxidoreductase</keyword>
<name>ORDA_ASPFN</name>
<proteinExistence type="evidence at transcript level"/>
<gene>
    <name type="primary">ordA</name>
    <name type="synonym">aflQ</name>
    <name type="synonym">cyp64</name>
    <name type="synonym">ord1</name>
    <name type="ORF">AFLA_139200</name>
</gene>
<comment type="function">
    <text evidence="2">Converts O-methylsterigmatocystin (OMST) to aflatoxin B1 and converts dihydro-O-methylsterigmatocystin (DHOMST) to aflatoxin B2 in the aflatoxin biosynthesis pathway.</text>
</comment>
<comment type="catalytic activity">
    <reaction>
        <text>8-O-methylsterigmatocystin + 2 reduced [NADPH--hemoprotein reductase] + 2 O2 = aflatoxin B1 + methanol + 2 oxidized [NADPH--hemoprotein reductase] + CO2 + H2O + 2 H(+)</text>
        <dbReference type="Rhea" id="RHEA:35759"/>
        <dbReference type="Rhea" id="RHEA-COMP:11964"/>
        <dbReference type="Rhea" id="RHEA-COMP:11965"/>
        <dbReference type="ChEBI" id="CHEBI:2504"/>
        <dbReference type="ChEBI" id="CHEBI:15377"/>
        <dbReference type="ChEBI" id="CHEBI:15378"/>
        <dbReference type="ChEBI" id="CHEBI:15379"/>
        <dbReference type="ChEBI" id="CHEBI:16526"/>
        <dbReference type="ChEBI" id="CHEBI:17790"/>
        <dbReference type="ChEBI" id="CHEBI:18171"/>
        <dbReference type="ChEBI" id="CHEBI:57618"/>
        <dbReference type="ChEBI" id="CHEBI:58210"/>
        <dbReference type="EC" id="1.14.14.117"/>
    </reaction>
</comment>
<comment type="catalytic activity">
    <reaction>
        <text>8-O-methyldihydrosterigmatocystin + 2 reduced [NADPH--hemoprotein reductase] + 2 O2 = aflatoxin B2 + methanol + 2 oxidized [NADPH--hemoprotein reductase] + CO2 + H2O + 2 H(+)</text>
        <dbReference type="Rhea" id="RHEA:35763"/>
        <dbReference type="Rhea" id="RHEA-COMP:11964"/>
        <dbReference type="Rhea" id="RHEA-COMP:11965"/>
        <dbReference type="ChEBI" id="CHEBI:15377"/>
        <dbReference type="ChEBI" id="CHEBI:15378"/>
        <dbReference type="ChEBI" id="CHEBI:15379"/>
        <dbReference type="ChEBI" id="CHEBI:16526"/>
        <dbReference type="ChEBI" id="CHEBI:17790"/>
        <dbReference type="ChEBI" id="CHEBI:48209"/>
        <dbReference type="ChEBI" id="CHEBI:57618"/>
        <dbReference type="ChEBI" id="CHEBI:58210"/>
        <dbReference type="ChEBI" id="CHEBI:72678"/>
        <dbReference type="EC" id="1.14.14.117"/>
    </reaction>
</comment>
<comment type="cofactor">
    <cofactor evidence="1">
        <name>heme</name>
        <dbReference type="ChEBI" id="CHEBI:30413"/>
    </cofactor>
</comment>
<comment type="pathway">
    <text>Mycotoxin biosynthesis; aflatoxin biosynthesis.</text>
</comment>
<comment type="similarity">
    <text evidence="3">Belongs to the cytochrome P450 family.</text>
</comment>